<reference key="1">
    <citation type="journal article" date="2010" name="Genome Biol. Evol.">
        <title>Continuing evolution of Burkholderia mallei through genome reduction and large-scale rearrangements.</title>
        <authorList>
            <person name="Losada L."/>
            <person name="Ronning C.M."/>
            <person name="DeShazer D."/>
            <person name="Woods D."/>
            <person name="Fedorova N."/>
            <person name="Kim H.S."/>
            <person name="Shabalina S.A."/>
            <person name="Pearson T.R."/>
            <person name="Brinkac L."/>
            <person name="Tan P."/>
            <person name="Nandi T."/>
            <person name="Crabtree J."/>
            <person name="Badger J."/>
            <person name="Beckstrom-Sternberg S."/>
            <person name="Saqib M."/>
            <person name="Schutzer S.E."/>
            <person name="Keim P."/>
            <person name="Nierman W.C."/>
        </authorList>
    </citation>
    <scope>NUCLEOTIDE SEQUENCE [LARGE SCALE GENOMIC DNA]</scope>
    <source>
        <strain>1710b</strain>
    </source>
</reference>
<organism>
    <name type="scientific">Burkholderia pseudomallei (strain 1710b)</name>
    <dbReference type="NCBI Taxonomy" id="320372"/>
    <lineage>
        <taxon>Bacteria</taxon>
        <taxon>Pseudomonadati</taxon>
        <taxon>Pseudomonadota</taxon>
        <taxon>Betaproteobacteria</taxon>
        <taxon>Burkholderiales</taxon>
        <taxon>Burkholderiaceae</taxon>
        <taxon>Burkholderia</taxon>
        <taxon>pseudomallei group</taxon>
    </lineage>
</organism>
<evidence type="ECO:0000255" key="1">
    <source>
        <dbReference type="HAMAP-Rule" id="MF_00338"/>
    </source>
</evidence>
<comment type="similarity">
    <text evidence="1">Belongs to the UPF0145 family.</text>
</comment>
<gene>
    <name type="ordered locus">BURPS1710b_1822</name>
</gene>
<dbReference type="EMBL" id="CP000124">
    <property type="protein sequence ID" value="ABA51058.1"/>
    <property type="molecule type" value="Genomic_DNA"/>
</dbReference>
<dbReference type="RefSeq" id="WP_004193399.1">
    <property type="nucleotide sequence ID" value="NC_007434.1"/>
</dbReference>
<dbReference type="SMR" id="Q3JT80"/>
<dbReference type="EnsemblBacteria" id="ABA51058">
    <property type="protein sequence ID" value="ABA51058"/>
    <property type="gene ID" value="BURPS1710b_1822"/>
</dbReference>
<dbReference type="KEGG" id="bpm:BURPS1710b_1822"/>
<dbReference type="HOGENOM" id="CLU_117144_1_1_4"/>
<dbReference type="Proteomes" id="UP000002700">
    <property type="component" value="Chromosome I"/>
</dbReference>
<dbReference type="Gene3D" id="3.30.110.70">
    <property type="entry name" value="Hypothetical protein apc22750. Chain B"/>
    <property type="match status" value="1"/>
</dbReference>
<dbReference type="HAMAP" id="MF_00338">
    <property type="entry name" value="UPF0145"/>
    <property type="match status" value="1"/>
</dbReference>
<dbReference type="InterPro" id="IPR035439">
    <property type="entry name" value="UPF0145_dom_sf"/>
</dbReference>
<dbReference type="InterPro" id="IPR002765">
    <property type="entry name" value="UPF0145_YbjQ-like"/>
</dbReference>
<dbReference type="PANTHER" id="PTHR34068:SF2">
    <property type="entry name" value="UPF0145 PROTEIN SCO3412"/>
    <property type="match status" value="1"/>
</dbReference>
<dbReference type="PANTHER" id="PTHR34068">
    <property type="entry name" value="UPF0145 PROTEIN YBJQ"/>
    <property type="match status" value="1"/>
</dbReference>
<dbReference type="Pfam" id="PF01906">
    <property type="entry name" value="YbjQ_1"/>
    <property type="match status" value="1"/>
</dbReference>
<dbReference type="SUPFAM" id="SSF117782">
    <property type="entry name" value="YbjQ-like"/>
    <property type="match status" value="1"/>
</dbReference>
<protein>
    <recommendedName>
        <fullName evidence="1">UPF0145 protein BURPS1710b_1822</fullName>
    </recommendedName>
</protein>
<proteinExistence type="inferred from homology"/>
<name>Y1822_BURP1</name>
<feature type="chain" id="PRO_0000225817" description="UPF0145 protein BURPS1710b_1822">
    <location>
        <begin position="1"/>
        <end position="111"/>
    </location>
</feature>
<sequence length="111" mass="11953">MADPQLITTAFDIPGYRIERSLGVARGIVVRSRSIVGTFGASIQTLFGGNISLYTSLCERARQDAYERMIDEARRMGGNAIVGMRYDATEIASGVTEVLCYGTAVQAVRAG</sequence>
<accession>Q3JT80</accession>